<organism>
    <name type="scientific">Cereibacter sphaeroides (strain ATCC 17025 / ATH 2.4.3)</name>
    <name type="common">Rhodobacter sphaeroides</name>
    <dbReference type="NCBI Taxonomy" id="349102"/>
    <lineage>
        <taxon>Bacteria</taxon>
        <taxon>Pseudomonadati</taxon>
        <taxon>Pseudomonadota</taxon>
        <taxon>Alphaproteobacteria</taxon>
        <taxon>Rhodobacterales</taxon>
        <taxon>Paracoccaceae</taxon>
        <taxon>Cereibacter</taxon>
    </lineage>
</organism>
<sequence length="41" mass="4942">MKVANSLRSLKLRHRDCQVVRRKGRVYVINKTQKRYKARQG</sequence>
<feature type="chain" id="PRO_1000003408" description="Large ribosomal subunit protein bL36">
    <location>
        <begin position="1"/>
        <end position="41"/>
    </location>
</feature>
<accession>A4WWC9</accession>
<reference key="1">
    <citation type="submission" date="2007-04" db="EMBL/GenBank/DDBJ databases">
        <title>Complete sequence of chromosome of Rhodobacter sphaeroides ATCC 17025.</title>
        <authorList>
            <consortium name="US DOE Joint Genome Institute"/>
            <person name="Copeland A."/>
            <person name="Lucas S."/>
            <person name="Lapidus A."/>
            <person name="Barry K."/>
            <person name="Detter J.C."/>
            <person name="Glavina del Rio T."/>
            <person name="Hammon N."/>
            <person name="Israni S."/>
            <person name="Dalin E."/>
            <person name="Tice H."/>
            <person name="Pitluck S."/>
            <person name="Chertkov O."/>
            <person name="Brettin T."/>
            <person name="Bruce D."/>
            <person name="Han C."/>
            <person name="Schmutz J."/>
            <person name="Larimer F."/>
            <person name="Land M."/>
            <person name="Hauser L."/>
            <person name="Kyrpides N."/>
            <person name="Kim E."/>
            <person name="Richardson P."/>
            <person name="Mackenzie C."/>
            <person name="Choudhary M."/>
            <person name="Donohue T.J."/>
            <person name="Kaplan S."/>
        </authorList>
    </citation>
    <scope>NUCLEOTIDE SEQUENCE [LARGE SCALE GENOMIC DNA]</scope>
    <source>
        <strain>ATCC 17025 / ATH 2.4.3</strain>
    </source>
</reference>
<proteinExistence type="inferred from homology"/>
<name>RL36_CERS5</name>
<gene>
    <name evidence="1" type="primary">rpmJ</name>
    <name type="ordered locus">Rsph17025_2806</name>
</gene>
<comment type="similarity">
    <text evidence="1">Belongs to the bacterial ribosomal protein bL36 family.</text>
</comment>
<protein>
    <recommendedName>
        <fullName evidence="1">Large ribosomal subunit protein bL36</fullName>
    </recommendedName>
    <alternativeName>
        <fullName evidence="2">50S ribosomal protein L36</fullName>
    </alternativeName>
</protein>
<evidence type="ECO:0000255" key="1">
    <source>
        <dbReference type="HAMAP-Rule" id="MF_00251"/>
    </source>
</evidence>
<evidence type="ECO:0000305" key="2"/>
<keyword id="KW-0687">Ribonucleoprotein</keyword>
<keyword id="KW-0689">Ribosomal protein</keyword>
<dbReference type="EMBL" id="CP000661">
    <property type="protein sequence ID" value="ABP71693.1"/>
    <property type="molecule type" value="Genomic_DNA"/>
</dbReference>
<dbReference type="SMR" id="A4WWC9"/>
<dbReference type="STRING" id="349102.Rsph17025_2806"/>
<dbReference type="KEGG" id="rsq:Rsph17025_2806"/>
<dbReference type="eggNOG" id="COG0257">
    <property type="taxonomic scope" value="Bacteria"/>
</dbReference>
<dbReference type="HOGENOM" id="CLU_135723_3_2_5"/>
<dbReference type="BioCyc" id="RSPH349102:G1G8M-2888-MONOMER"/>
<dbReference type="GO" id="GO:1990904">
    <property type="term" value="C:ribonucleoprotein complex"/>
    <property type="evidence" value="ECO:0007669"/>
    <property type="project" value="UniProtKB-KW"/>
</dbReference>
<dbReference type="GO" id="GO:0005840">
    <property type="term" value="C:ribosome"/>
    <property type="evidence" value="ECO:0007669"/>
    <property type="project" value="UniProtKB-KW"/>
</dbReference>
<dbReference type="GO" id="GO:0003735">
    <property type="term" value="F:structural constituent of ribosome"/>
    <property type="evidence" value="ECO:0007669"/>
    <property type="project" value="InterPro"/>
</dbReference>
<dbReference type="GO" id="GO:0006412">
    <property type="term" value="P:translation"/>
    <property type="evidence" value="ECO:0007669"/>
    <property type="project" value="UniProtKB-UniRule"/>
</dbReference>
<dbReference type="HAMAP" id="MF_00251">
    <property type="entry name" value="Ribosomal_bL36"/>
    <property type="match status" value="1"/>
</dbReference>
<dbReference type="InterPro" id="IPR000473">
    <property type="entry name" value="Ribosomal_bL36"/>
</dbReference>
<dbReference type="InterPro" id="IPR035977">
    <property type="entry name" value="Ribosomal_bL36_sp"/>
</dbReference>
<dbReference type="InterPro" id="IPR047621">
    <property type="entry name" value="Ribosomal_L36_bact"/>
</dbReference>
<dbReference type="NCBIfam" id="NF002021">
    <property type="entry name" value="PRK00831.1"/>
    <property type="match status" value="1"/>
</dbReference>
<dbReference type="NCBIfam" id="TIGR01022">
    <property type="entry name" value="rpmJ_bact"/>
    <property type="match status" value="1"/>
</dbReference>
<dbReference type="PANTHER" id="PTHR47781">
    <property type="entry name" value="50S RIBOSOMAL PROTEIN L36 2"/>
    <property type="match status" value="1"/>
</dbReference>
<dbReference type="PANTHER" id="PTHR47781:SF1">
    <property type="entry name" value="LARGE RIBOSOMAL SUBUNIT PROTEIN BL36B"/>
    <property type="match status" value="1"/>
</dbReference>
<dbReference type="Pfam" id="PF00444">
    <property type="entry name" value="Ribosomal_L36"/>
    <property type="match status" value="1"/>
</dbReference>
<dbReference type="SUPFAM" id="SSF57840">
    <property type="entry name" value="Ribosomal protein L36"/>
    <property type="match status" value="1"/>
</dbReference>